<protein>
    <recommendedName>
        <fullName evidence="1">Fluoride-specific ion channel FluC</fullName>
    </recommendedName>
</protein>
<sequence length="127" mass="14143">MNFSKSLLLIAFGGAIGSIFRYLLQYWFGNVLGYSLPWGTLTANLLGSFLIGVVYAISDRFPLFDPQWKFLLASGFCGGFTTFSTFSYETFQMLKSGHYILFLGYICLSVVGGIGFAFAGVWMIKNF</sequence>
<name>FLUC_LEPIC</name>
<dbReference type="EMBL" id="AE016823">
    <property type="protein sequence ID" value="AAS69087.1"/>
    <property type="molecule type" value="Genomic_DNA"/>
</dbReference>
<dbReference type="RefSeq" id="WP_001011702.1">
    <property type="nucleotide sequence ID" value="NC_005823.1"/>
</dbReference>
<dbReference type="SMR" id="Q72V37"/>
<dbReference type="GeneID" id="61143817"/>
<dbReference type="KEGG" id="lic:LIC_10466"/>
<dbReference type="HOGENOM" id="CLU_114342_3_2_12"/>
<dbReference type="Proteomes" id="UP000007037">
    <property type="component" value="Chromosome I"/>
</dbReference>
<dbReference type="GO" id="GO:0005886">
    <property type="term" value="C:plasma membrane"/>
    <property type="evidence" value="ECO:0007669"/>
    <property type="project" value="UniProtKB-SubCell"/>
</dbReference>
<dbReference type="GO" id="GO:0062054">
    <property type="term" value="F:fluoride channel activity"/>
    <property type="evidence" value="ECO:0007669"/>
    <property type="project" value="UniProtKB-UniRule"/>
</dbReference>
<dbReference type="GO" id="GO:0046872">
    <property type="term" value="F:metal ion binding"/>
    <property type="evidence" value="ECO:0007669"/>
    <property type="project" value="UniProtKB-KW"/>
</dbReference>
<dbReference type="GO" id="GO:0140114">
    <property type="term" value="P:cellular detoxification of fluoride"/>
    <property type="evidence" value="ECO:0007669"/>
    <property type="project" value="UniProtKB-UniRule"/>
</dbReference>
<dbReference type="HAMAP" id="MF_00454">
    <property type="entry name" value="FluC"/>
    <property type="match status" value="1"/>
</dbReference>
<dbReference type="InterPro" id="IPR003691">
    <property type="entry name" value="FluC"/>
</dbReference>
<dbReference type="NCBIfam" id="TIGR00494">
    <property type="entry name" value="crcB"/>
    <property type="match status" value="1"/>
</dbReference>
<dbReference type="PANTHER" id="PTHR28259">
    <property type="entry name" value="FLUORIDE EXPORT PROTEIN 1-RELATED"/>
    <property type="match status" value="1"/>
</dbReference>
<dbReference type="PANTHER" id="PTHR28259:SF1">
    <property type="entry name" value="FLUORIDE EXPORT PROTEIN 1-RELATED"/>
    <property type="match status" value="1"/>
</dbReference>
<dbReference type="Pfam" id="PF02537">
    <property type="entry name" value="CRCB"/>
    <property type="match status" value="1"/>
</dbReference>
<reference key="1">
    <citation type="journal article" date="2004" name="J. Bacteriol.">
        <title>Comparative genomics of two Leptospira interrogans serovars reveals novel insights into physiology and pathogenesis.</title>
        <authorList>
            <person name="Nascimento A.L.T.O."/>
            <person name="Ko A.I."/>
            <person name="Martins E.A.L."/>
            <person name="Monteiro-Vitorello C.B."/>
            <person name="Ho P.L."/>
            <person name="Haake D.A."/>
            <person name="Verjovski-Almeida S."/>
            <person name="Hartskeerl R.A."/>
            <person name="Marques M.V."/>
            <person name="Oliveira M.C."/>
            <person name="Menck C.F.M."/>
            <person name="Leite L.C.C."/>
            <person name="Carrer H."/>
            <person name="Coutinho L.L."/>
            <person name="Degrave W.M."/>
            <person name="Dellagostin O.A."/>
            <person name="El-Dorry H."/>
            <person name="Ferro E.S."/>
            <person name="Ferro M.I.T."/>
            <person name="Furlan L.R."/>
            <person name="Gamberini M."/>
            <person name="Giglioti E.A."/>
            <person name="Goes-Neto A."/>
            <person name="Goldman G.H."/>
            <person name="Goldman M.H.S."/>
            <person name="Harakava R."/>
            <person name="Jeronimo S.M.B."/>
            <person name="Junqueira-de-Azevedo I.L.M."/>
            <person name="Kimura E.T."/>
            <person name="Kuramae E.E."/>
            <person name="Lemos E.G.M."/>
            <person name="Lemos M.V.F."/>
            <person name="Marino C.L."/>
            <person name="Nunes L.R."/>
            <person name="de Oliveira R.C."/>
            <person name="Pereira G.G."/>
            <person name="Reis M.S."/>
            <person name="Schriefer A."/>
            <person name="Siqueira W.J."/>
            <person name="Sommer P."/>
            <person name="Tsai S.M."/>
            <person name="Simpson A.J.G."/>
            <person name="Ferro J.A."/>
            <person name="Camargo L.E.A."/>
            <person name="Kitajima J.P."/>
            <person name="Setubal J.C."/>
            <person name="Van Sluys M.A."/>
        </authorList>
    </citation>
    <scope>NUCLEOTIDE SEQUENCE [LARGE SCALE GENOMIC DNA]</scope>
    <source>
        <strain>Fiocruz L1-130</strain>
    </source>
</reference>
<evidence type="ECO:0000255" key="1">
    <source>
        <dbReference type="HAMAP-Rule" id="MF_00454"/>
    </source>
</evidence>
<organism>
    <name type="scientific">Leptospira interrogans serogroup Icterohaemorrhagiae serovar copenhageni (strain Fiocruz L1-130)</name>
    <dbReference type="NCBI Taxonomy" id="267671"/>
    <lineage>
        <taxon>Bacteria</taxon>
        <taxon>Pseudomonadati</taxon>
        <taxon>Spirochaetota</taxon>
        <taxon>Spirochaetia</taxon>
        <taxon>Leptospirales</taxon>
        <taxon>Leptospiraceae</taxon>
        <taxon>Leptospira</taxon>
    </lineage>
</organism>
<keyword id="KW-0997">Cell inner membrane</keyword>
<keyword id="KW-1003">Cell membrane</keyword>
<keyword id="KW-0407">Ion channel</keyword>
<keyword id="KW-0406">Ion transport</keyword>
<keyword id="KW-0472">Membrane</keyword>
<keyword id="KW-0479">Metal-binding</keyword>
<keyword id="KW-0915">Sodium</keyword>
<keyword id="KW-0812">Transmembrane</keyword>
<keyword id="KW-1133">Transmembrane helix</keyword>
<keyword id="KW-0813">Transport</keyword>
<proteinExistence type="inferred from homology"/>
<gene>
    <name evidence="1" type="primary">fluC</name>
    <name evidence="1" type="synonym">crcB</name>
    <name type="ordered locus">LIC_10466</name>
</gene>
<accession>Q72V37</accession>
<feature type="chain" id="PRO_0000110123" description="Fluoride-specific ion channel FluC">
    <location>
        <begin position="1"/>
        <end position="127"/>
    </location>
</feature>
<feature type="transmembrane region" description="Helical" evidence="1">
    <location>
        <begin position="8"/>
        <end position="28"/>
    </location>
</feature>
<feature type="transmembrane region" description="Helical" evidence="1">
    <location>
        <begin position="37"/>
        <end position="57"/>
    </location>
</feature>
<feature type="transmembrane region" description="Helical" evidence="1">
    <location>
        <begin position="68"/>
        <end position="88"/>
    </location>
</feature>
<feature type="transmembrane region" description="Helical" evidence="1">
    <location>
        <begin position="100"/>
        <end position="120"/>
    </location>
</feature>
<feature type="binding site" evidence="1">
    <location>
        <position position="78"/>
    </location>
    <ligand>
        <name>Na(+)</name>
        <dbReference type="ChEBI" id="CHEBI:29101"/>
        <note>structural</note>
    </ligand>
</feature>
<feature type="binding site" evidence="1">
    <location>
        <position position="81"/>
    </location>
    <ligand>
        <name>Na(+)</name>
        <dbReference type="ChEBI" id="CHEBI:29101"/>
        <note>structural</note>
    </ligand>
</feature>
<comment type="function">
    <text evidence="1">Fluoride-specific ion channel. Important for reducing fluoride concentration in the cell, thus reducing its toxicity.</text>
</comment>
<comment type="catalytic activity">
    <reaction evidence="1">
        <text>fluoride(in) = fluoride(out)</text>
        <dbReference type="Rhea" id="RHEA:76159"/>
        <dbReference type="ChEBI" id="CHEBI:17051"/>
    </reaction>
    <physiologicalReaction direction="left-to-right" evidence="1">
        <dbReference type="Rhea" id="RHEA:76160"/>
    </physiologicalReaction>
</comment>
<comment type="activity regulation">
    <text evidence="1">Na(+) is not transported, but it plays an essential structural role and its presence is essential for fluoride channel function.</text>
</comment>
<comment type="subcellular location">
    <subcellularLocation>
        <location evidence="1">Cell inner membrane</location>
        <topology evidence="1">Multi-pass membrane protein</topology>
    </subcellularLocation>
</comment>
<comment type="similarity">
    <text evidence="1">Belongs to the fluoride channel Fluc/FEX (TC 1.A.43) family.</text>
</comment>